<name>YL123_MIMIV</name>
<accession>Q5UPJ8</accession>
<organism>
    <name type="scientific">Acanthamoeba polyphaga mimivirus</name>
    <name type="common">APMV</name>
    <dbReference type="NCBI Taxonomy" id="212035"/>
    <lineage>
        <taxon>Viruses</taxon>
        <taxon>Varidnaviria</taxon>
        <taxon>Bamfordvirae</taxon>
        <taxon>Nucleocytoviricota</taxon>
        <taxon>Megaviricetes</taxon>
        <taxon>Imitervirales</taxon>
        <taxon>Mimiviridae</taxon>
        <taxon>Megamimivirinae</taxon>
        <taxon>Mimivirus</taxon>
        <taxon>Mimivirus bradfordmassiliense</taxon>
    </lineage>
</organism>
<organismHost>
    <name type="scientific">Acanthamoeba polyphaga</name>
    <name type="common">Amoeba</name>
    <dbReference type="NCBI Taxonomy" id="5757"/>
</organismHost>
<protein>
    <recommendedName>
        <fullName>Uncharacterized protein L123</fullName>
    </recommendedName>
</protein>
<sequence>MTISNQSDSKPLQFHSTTMSNLCTSCGERPKWFDSARQQYSPWCSNTCKNLNQTHAVQGQPICAIEGCHRPAHFDGKTFSPGCGIRHRNEALALGITKPKN</sequence>
<gene>
    <name type="ordered locus">MIMI_L123</name>
</gene>
<feature type="chain" id="PRO_0000253224" description="Uncharacterized protein L123">
    <location>
        <begin position="1"/>
        <end position="101"/>
    </location>
</feature>
<keyword id="KW-1185">Reference proteome</keyword>
<reference key="1">
    <citation type="journal article" date="2004" name="Science">
        <title>The 1.2-megabase genome sequence of Mimivirus.</title>
        <authorList>
            <person name="Raoult D."/>
            <person name="Audic S."/>
            <person name="Robert C."/>
            <person name="Abergel C."/>
            <person name="Renesto P."/>
            <person name="Ogata H."/>
            <person name="La Scola B."/>
            <person name="Susan M."/>
            <person name="Claverie J.-M."/>
        </authorList>
    </citation>
    <scope>NUCLEOTIDE SEQUENCE [LARGE SCALE GENOMIC DNA]</scope>
    <source>
        <strain>Rowbotham-Bradford</strain>
    </source>
</reference>
<proteinExistence type="predicted"/>
<dbReference type="EMBL" id="AY653733">
    <property type="protein sequence ID" value="AAV50398.1"/>
    <property type="molecule type" value="Genomic_DNA"/>
</dbReference>
<dbReference type="SMR" id="Q5UPJ8"/>
<dbReference type="KEGG" id="vg:9924722"/>
<dbReference type="OrthoDB" id="28050at10239"/>
<dbReference type="Proteomes" id="UP000001134">
    <property type="component" value="Genome"/>
</dbReference>